<name>DPOL_GPCMV</name>
<protein>
    <recommendedName>
        <fullName>DNA polymerase</fullName>
        <ecNumber>2.7.7.7</ecNumber>
    </recommendedName>
</protein>
<reference key="1">
    <citation type="journal article" date="1995" name="J. Gen. Virol.">
        <title>Sequence and transcriptional analysis of the guinea-pig cytomegalovirus DNA polymerase gene.</title>
        <authorList>
            <person name="Schleiss M.R."/>
        </authorList>
    </citation>
    <scope>NUCLEOTIDE SEQUENCE [GENOMIC DNA]</scope>
    <source>
        <strain>22122/UMN</strain>
    </source>
</reference>
<reference key="2">
    <citation type="journal article" date="2008" name="Virol. J.">
        <title>Analysis of the nucleotide sequence of the guinea pig cytomegalovirus (GPCMV) genome.</title>
        <authorList>
            <person name="Schleiss M.R."/>
            <person name="McGregor A."/>
            <person name="Choi K.Y."/>
            <person name="Date S.V."/>
            <person name="Cui X."/>
            <person name="McVoy M.A."/>
        </authorList>
    </citation>
    <scope>NUCLEOTIDE SEQUENCE [LARGE SCALE GENOMIC DNA]</scope>
    <scope>SEQUENCE REVISION</scope>
    <source>
        <strain>22122/UMN</strain>
    </source>
</reference>
<reference key="3">
    <citation type="journal article" date="2013" name="Genome Announc.">
        <title>Complete genome sequence of pathogenic Guinea pig cytomegalovirus from salivary gland homogenates of infected animals.</title>
        <authorList>
            <person name="Yang D."/>
            <person name="Tamburro K."/>
            <person name="Dittmer D."/>
            <person name="Cui X."/>
            <person name="McVoy M.A."/>
            <person name="Hernandez-Alvarado N."/>
            <person name="Schleiss M.R."/>
        </authorList>
    </citation>
    <scope>SEQUENCE REVISION</scope>
    <source>
        <strain>22122</strain>
    </source>
</reference>
<reference key="4">
    <citation type="journal article" date="2011" name="J. Gen. Virol.">
        <title>Re-evaluation of the genome sequence of guinea pig cytomegalovirus.</title>
        <authorList>
            <person name="Kanai K."/>
            <person name="Yamada S."/>
            <person name="Yamamoto Y."/>
            <person name="Fukui Y."/>
            <person name="Kurane I."/>
            <person name="Inoue N."/>
        </authorList>
    </citation>
    <scope>NUCLEOTIDE SEQUENCE [LARGE SCALE GENOMIC DNA]</scope>
    <source>
        <strain>22122/ATCC-P5</strain>
    </source>
</reference>
<feature type="chain" id="PRO_0000046506" description="DNA polymerase">
    <location>
        <begin position="1"/>
        <end position="1117"/>
    </location>
</feature>
<feature type="region of interest" description="Disordered" evidence="1">
    <location>
        <begin position="591"/>
        <end position="621"/>
    </location>
</feature>
<feature type="compositionally biased region" description="Low complexity" evidence="1">
    <location>
        <begin position="606"/>
        <end position="618"/>
    </location>
</feature>
<keyword id="KW-0235">DNA replication</keyword>
<keyword id="KW-0238">DNA-binding</keyword>
<keyword id="KW-0239">DNA-directed DNA polymerase</keyword>
<keyword id="KW-1048">Host nucleus</keyword>
<keyword id="KW-0548">Nucleotidyltransferase</keyword>
<keyword id="KW-1185">Reference proteome</keyword>
<keyword id="KW-0808">Transferase</keyword>
<keyword id="KW-1194">Viral DNA replication</keyword>
<dbReference type="EC" id="2.7.7.7"/>
<dbReference type="EMBL" id="AB592928">
    <property type="protein sequence ID" value="BAJ78522.1"/>
    <property type="molecule type" value="Genomic_DNA"/>
</dbReference>
<dbReference type="EMBL" id="KC503762">
    <property type="protein sequence ID" value="AGE11533.1"/>
    <property type="molecule type" value="Genomic_DNA"/>
</dbReference>
<dbReference type="SMR" id="Q69025"/>
<dbReference type="KEGG" id="vg:14536656"/>
<dbReference type="Proteomes" id="UP000102041">
    <property type="component" value="Segment"/>
</dbReference>
<dbReference type="Proteomes" id="UP000132784">
    <property type="component" value="Segment"/>
</dbReference>
<dbReference type="GO" id="GO:0042025">
    <property type="term" value="C:host cell nucleus"/>
    <property type="evidence" value="ECO:0007669"/>
    <property type="project" value="UniProtKB-SubCell"/>
</dbReference>
<dbReference type="GO" id="GO:0003677">
    <property type="term" value="F:DNA binding"/>
    <property type="evidence" value="ECO:0007669"/>
    <property type="project" value="UniProtKB-KW"/>
</dbReference>
<dbReference type="GO" id="GO:0003887">
    <property type="term" value="F:DNA-directed DNA polymerase activity"/>
    <property type="evidence" value="ECO:0007669"/>
    <property type="project" value="UniProtKB-KW"/>
</dbReference>
<dbReference type="GO" id="GO:0000166">
    <property type="term" value="F:nucleotide binding"/>
    <property type="evidence" value="ECO:0007669"/>
    <property type="project" value="InterPro"/>
</dbReference>
<dbReference type="GO" id="GO:0006261">
    <property type="term" value="P:DNA-templated DNA replication"/>
    <property type="evidence" value="ECO:0007669"/>
    <property type="project" value="TreeGrafter"/>
</dbReference>
<dbReference type="GO" id="GO:0039693">
    <property type="term" value="P:viral DNA genome replication"/>
    <property type="evidence" value="ECO:0007669"/>
    <property type="project" value="UniProtKB-KW"/>
</dbReference>
<dbReference type="Gene3D" id="1.10.132.60">
    <property type="entry name" value="DNA polymerase family B, C-terminal domain"/>
    <property type="match status" value="1"/>
</dbReference>
<dbReference type="Gene3D" id="3.30.342.10">
    <property type="entry name" value="DNA Polymerase, chain B, domain 1"/>
    <property type="match status" value="1"/>
</dbReference>
<dbReference type="Gene3D" id="1.10.287.690">
    <property type="entry name" value="Helix hairpin bin"/>
    <property type="match status" value="1"/>
</dbReference>
<dbReference type="Gene3D" id="3.90.1600.10">
    <property type="entry name" value="Palm domain of DNA polymerase"/>
    <property type="match status" value="1"/>
</dbReference>
<dbReference type="Gene3D" id="3.30.420.10">
    <property type="entry name" value="Ribonuclease H-like superfamily/Ribonuclease H"/>
    <property type="match status" value="1"/>
</dbReference>
<dbReference type="InterPro" id="IPR006172">
    <property type="entry name" value="DNA-dir_DNA_pol_B"/>
</dbReference>
<dbReference type="InterPro" id="IPR017964">
    <property type="entry name" value="DNA-dir_DNA_pol_B_CS"/>
</dbReference>
<dbReference type="InterPro" id="IPR006133">
    <property type="entry name" value="DNA-dir_DNA_pol_B_exonuc"/>
</dbReference>
<dbReference type="InterPro" id="IPR006134">
    <property type="entry name" value="DNA-dir_DNA_pol_B_multi_dom"/>
</dbReference>
<dbReference type="InterPro" id="IPR043502">
    <property type="entry name" value="DNA/RNA_pol_sf"/>
</dbReference>
<dbReference type="InterPro" id="IPR042087">
    <property type="entry name" value="DNA_pol_B_thumb"/>
</dbReference>
<dbReference type="InterPro" id="IPR023211">
    <property type="entry name" value="DNA_pol_palm_dom_sf"/>
</dbReference>
<dbReference type="InterPro" id="IPR050240">
    <property type="entry name" value="DNA_pol_type-B"/>
</dbReference>
<dbReference type="InterPro" id="IPR012337">
    <property type="entry name" value="RNaseH-like_sf"/>
</dbReference>
<dbReference type="InterPro" id="IPR036397">
    <property type="entry name" value="RNaseH_sf"/>
</dbReference>
<dbReference type="PANTHER" id="PTHR10322">
    <property type="entry name" value="DNA POLYMERASE CATALYTIC SUBUNIT"/>
    <property type="match status" value="1"/>
</dbReference>
<dbReference type="PANTHER" id="PTHR10322:SF23">
    <property type="entry name" value="DNA POLYMERASE DELTA CATALYTIC SUBUNIT"/>
    <property type="match status" value="1"/>
</dbReference>
<dbReference type="Pfam" id="PF00136">
    <property type="entry name" value="DNA_pol_B"/>
    <property type="match status" value="1"/>
</dbReference>
<dbReference type="Pfam" id="PF03104">
    <property type="entry name" value="DNA_pol_B_exo1"/>
    <property type="match status" value="1"/>
</dbReference>
<dbReference type="PRINTS" id="PR00106">
    <property type="entry name" value="DNAPOLB"/>
</dbReference>
<dbReference type="SMART" id="SM00486">
    <property type="entry name" value="POLBc"/>
    <property type="match status" value="1"/>
</dbReference>
<dbReference type="SUPFAM" id="SSF56672">
    <property type="entry name" value="DNA/RNA polymerases"/>
    <property type="match status" value="1"/>
</dbReference>
<dbReference type="SUPFAM" id="SSF53098">
    <property type="entry name" value="Ribonuclease H-like"/>
    <property type="match status" value="1"/>
</dbReference>
<dbReference type="PROSITE" id="PS00116">
    <property type="entry name" value="DNA_POLYMERASE_B"/>
    <property type="match status" value="1"/>
</dbReference>
<organismHost>
    <name type="scientific">Cavia porcellus</name>
    <name type="common">Guinea pig</name>
    <dbReference type="NCBI Taxonomy" id="10141"/>
</organismHost>
<comment type="catalytic activity">
    <reaction>
        <text>DNA(n) + a 2'-deoxyribonucleoside 5'-triphosphate = DNA(n+1) + diphosphate</text>
        <dbReference type="Rhea" id="RHEA:22508"/>
        <dbReference type="Rhea" id="RHEA-COMP:17339"/>
        <dbReference type="Rhea" id="RHEA-COMP:17340"/>
        <dbReference type="ChEBI" id="CHEBI:33019"/>
        <dbReference type="ChEBI" id="CHEBI:61560"/>
        <dbReference type="ChEBI" id="CHEBI:173112"/>
        <dbReference type="EC" id="2.7.7.7"/>
    </reaction>
</comment>
<comment type="subcellular location">
    <subcellularLocation>
        <location>Host nucleus</location>
    </subcellularLocation>
</comment>
<comment type="similarity">
    <text evidence="2">Belongs to the DNA polymerase type-B family.</text>
</comment>
<comment type="caution">
    <text evidence="2">The strain used in PubMed:9049389 and PubMed:19014498 had been extensively passaged and contains genetic alterations. A correct sequence has thus been sequenced in PubMed:23516193 by direct sequencing of salivary gland homogenates.</text>
</comment>
<sequence>MSAPVFFNPYLCGGAARRRNGCSTVDSRRGNGPTKKGKKSFLQVVPRGVIYDGEKGLIKKVTQHPPRMFYNNVQYLLEPQMSWPTLPCRETCRVGCGREQPLRFHTFDQIDSTVYADSVEQIFLGYRRHVVPCGNVIRMFGRTCDGSSVCVNVFGQPSYFYCEYDGSEGYLDNYLSTVLKETEDVTKIVFTLDAQRVHKYSLFGYNTKYIENLYRVTLNNWPVCKRLAQNLQSRGLRVYEAGVDPVARFCVDRKIPSFGWCVIKRFYARSSGLASFCDIEIDCEIGDVEADDSDMSWPEYRCASFDIECMSGGDRFPDSSMVDDIVIQISVICYAVGRSGAESDGVSGAEAAVREHQHLFTLGPCAPIPGTHVYEFPSEYELLLGFFIFFKAYSPDILTGYNINLFDIKYLLQRMEKIYHANVSEFTKLRFGGRFSIYVPVGNKPRNASSASIKVHCTGTVVLDMYPVCVAKTSAPNYKLETMAEMYLNEHKDDLSYKEIPPTFLANDNGRAVVGRYCIKDALLVKRLFEKLNYHYEAASVARLARIPLRSVIFEGQQIRIYSCILEEAGERNMILPSFLTAKRPGELATESSPVASFEEDSEQTSDSSLGEVSSQGSSDGGVGYQGATVLEPDVGFYDTPVAVFDFASLYPSIIMRHNLCYSTYLPLGRDDGLSDDDVFLLEFDDGTRYGFVREHVRKSILGELLARWLAKRKSVRKVLAECQDEVEKLILDKYQLALKVTCNAFYGFTGVSSGMMPCLPIAAAITRIGRDMLMSVVDYVNTYMGHAEFWLRYLGEEDLTGDALNVKVIYGDTDSVFVICGGVKCGSVLEHGEAIAGHITRALFREPIKLEFEKVFVNLMMICKKRYVGRIYGQTKLSMKGIELVRKTACEYVKSTVRNVLNMIFFEDDVSAGAVELSRMTMDDVKRHGVPSGFYRIVEALSNARDELYLNRVDVKKLVLSASLSQEVSAYKQQNLPHLRVIQRLAARREELPSVGDRVPYVLIAPPPGSSKNVPNYEISEDPGYVIEHKLPVNGEKYFEHVVKTVTNVLGPIIPKDCARKEKFLSYVLPQRVYVSRPFMPYACAANELVVACDDGGVMMGVYGIKPVMCGVSVTN</sequence>
<proteinExistence type="inferred from homology"/>
<organism>
    <name type="scientific">Guinea pig cytomegalovirus (strain 22122)</name>
    <name type="common">GPCMV</name>
    <dbReference type="NCBI Taxonomy" id="103920"/>
    <lineage>
        <taxon>Viruses</taxon>
        <taxon>Duplodnaviria</taxon>
        <taxon>Heunggongvirae</taxon>
        <taxon>Peploviricota</taxon>
        <taxon>Herviviricetes</taxon>
        <taxon>Herpesvirales</taxon>
        <taxon>Orthoherpesviridae</taxon>
        <taxon>Betaherpesvirinae</taxon>
        <taxon>Quwivirus</taxon>
        <taxon>Quwivirus caviidbeta2</taxon>
    </lineage>
</organism>
<accession>Q69025</accession>
<accession>E9RH70</accession>
<evidence type="ECO:0000256" key="1">
    <source>
        <dbReference type="SAM" id="MobiDB-lite"/>
    </source>
</evidence>
<evidence type="ECO:0000305" key="2"/>
<gene>
    <name type="ORF">UL54</name>
</gene>